<feature type="chain" id="PRO_0000083418" description="Transcription factor GATA-5">
    <location>
        <begin position="1"/>
        <end position="397"/>
    </location>
</feature>
<feature type="zinc finger region" description="GATA-type 1" evidence="3">
    <location>
        <begin position="189"/>
        <end position="213"/>
    </location>
</feature>
<feature type="zinc finger region" description="GATA-type 2" evidence="3">
    <location>
        <begin position="243"/>
        <end position="267"/>
    </location>
</feature>
<feature type="region of interest" description="Disordered" evidence="4">
    <location>
        <begin position="48"/>
        <end position="116"/>
    </location>
</feature>
<feature type="region of interest" description="Disordered" evidence="4">
    <location>
        <begin position="281"/>
        <end position="356"/>
    </location>
</feature>
<feature type="compositionally biased region" description="Low complexity" evidence="4">
    <location>
        <begin position="87"/>
        <end position="101"/>
    </location>
</feature>
<feature type="compositionally biased region" description="Gly residues" evidence="4">
    <location>
        <begin position="102"/>
        <end position="112"/>
    </location>
</feature>
<feature type="compositionally biased region" description="Basic residues" evidence="4">
    <location>
        <begin position="289"/>
        <end position="298"/>
    </location>
</feature>
<feature type="compositionally biased region" description="Low complexity" evidence="4">
    <location>
        <begin position="310"/>
        <end position="335"/>
    </location>
</feature>
<feature type="sequence variant" id="VAR_073309" description="In dbSNP:rs113068438." evidence="6">
    <original>Q</original>
    <variation>R</variation>
    <location>
        <position position="3"/>
    </location>
</feature>
<feature type="sequence variant" id="VAR_073310" description="In CHTD5; decreased transcriptional activity; dbSNP:rs1555897088." evidence="13">
    <original>Y</original>
    <variation>D</variation>
    <location>
        <position position="16"/>
    </location>
</feature>
<feature type="sequence variant" id="VAR_073311" description="In dbSNP:rs200383755." evidence="6">
    <original>S</original>
    <variation>W</variation>
    <location>
        <position position="19"/>
    </location>
</feature>
<feature type="sequence variant" id="VAR_080604" description="In dbSNP:rs6142775." evidence="6">
    <original>T</original>
    <variation>P</variation>
    <location>
        <position position="67"/>
    </location>
</feature>
<feature type="sequence variant" id="VAR_080605" description="In CHTD5; uncertain significance." evidence="8">
    <original>R</original>
    <variation>G</variation>
    <location>
        <position position="132"/>
    </location>
</feature>
<feature type="sequence variant" id="VAR_073312" description="In CHTD5; decreased transcriptional activity." evidence="11">
    <original>Y</original>
    <variation>F</variation>
    <location>
        <position position="138"/>
    </location>
</feature>
<feature type="sequence variant" id="VAR_073313" description="In CHTD5; uncertain significance; dbSNP:rs111554140." evidence="6">
    <original>Y</original>
    <variation>H</variation>
    <location>
        <position position="142"/>
    </location>
</feature>
<feature type="sequence variant" id="VAR_073314" description="In dbSNP:rs141950357." evidence="6">
    <original>G</original>
    <variation>S</variation>
    <location>
        <position position="166"/>
    </location>
</feature>
<feature type="sequence variant" id="VAR_067699" description="In CHTD5; uncertain significance." evidence="5">
    <original>G</original>
    <variation>V</variation>
    <location>
        <position position="184"/>
    </location>
</feature>
<feature type="sequence variant" id="VAR_073070" description="In CHTD5; decreased transcriptional activity." evidence="10">
    <original>R</original>
    <variation>G</variation>
    <location>
        <position position="187"/>
    </location>
</feature>
<feature type="sequence variant" id="VAR_080606" description="In CHTD5; uncertain significance; dbSNP:rs782051102." evidence="8">
    <original>V</original>
    <variation>A</variation>
    <location>
        <position position="190"/>
    </location>
</feature>
<feature type="sequence variant" id="VAR_073071" description="In CHTD5; decreased transcriptional activity; dbSNP:rs1555896779." evidence="7">
    <original>L</original>
    <variation>V</variation>
    <location>
        <position position="199"/>
    </location>
</feature>
<feature type="sequence variant" id="VAR_073072" description="In CHTD5; decreased transcriptional activity; dbSNP:rs1555896778." evidence="9">
    <original>W</original>
    <variation>G</variation>
    <location>
        <position position="200"/>
    </location>
</feature>
<feature type="sequence variant" id="VAR_073315" description="In CHTD5; uncertain significance; decreased transcriptional activity; dbSNP:rs41305803." evidence="12">
    <original>D</original>
    <variation>E</variation>
    <location>
        <position position="203"/>
    </location>
</feature>
<feature type="sequence variant" id="VAR_073073" description="In CHTD5; decreased transcriptional activity." evidence="10">
    <original>H</original>
    <variation>R</variation>
    <location>
        <position position="207"/>
    </location>
</feature>
<feature type="sequence variant" id="VAR_080607" description="In CHTD5; loss of transcriptional activity." evidence="12">
    <location>
        <begin position="208"/>
        <end position="397"/>
    </location>
</feature>
<feature type="sequence variant" id="VAR_073316" description="In CHTD5; decreased transcriptional activity; dbSNP:rs997414695." evidence="11">
    <original>C</original>
    <variation>G</variation>
    <location>
        <position position="210"/>
    </location>
</feature>
<feature type="sequence variant" id="VAR_067700" description="In CHTD5; uncertain significance." evidence="5">
    <original>K</original>
    <variation>T</variation>
    <location>
        <position position="218"/>
    </location>
</feature>
<feature type="sequence variant" id="VAR_080608" description="In CHTD5; uncertain significance." evidence="8">
    <original>N</original>
    <variation>H</variation>
    <location>
        <position position="223"/>
    </location>
</feature>
<feature type="sequence variant" id="VAR_073317" description="In CHTD5; decreased transcriptional activity." evidence="14">
    <original>G</original>
    <variation>D</variation>
    <location>
        <position position="240"/>
    </location>
</feature>
<feature type="sequence variant" id="VAR_073318" description="In CHTD5; decreased transcriptional activity." evidence="13">
    <original>T</original>
    <variation>P</variation>
    <location>
        <position position="252"/>
    </location>
</feature>
<feature type="sequence variant" id="VAR_067701" description="In CHTD5; uncertain significance." evidence="5">
    <original>A</original>
    <variation>P</variation>
    <location>
        <position position="266"/>
    </location>
</feature>
<feature type="sequence variant" id="VAR_080609" description="In CHTD5; uncertain significance." evidence="8">
    <original>H</original>
    <variation>R</variation>
    <location>
        <position position="274"/>
    </location>
</feature>
<feature type="sequence conflict" description="In Ref. 4; AAH47790." evidence="15" ref="4">
    <original>A</original>
    <variation>T</variation>
    <location>
        <position position="92"/>
    </location>
</feature>
<protein>
    <recommendedName>
        <fullName>Transcription factor GATA-5</fullName>
    </recommendedName>
    <alternativeName>
        <fullName>GATA-binding factor 5</fullName>
    </alternativeName>
</protein>
<name>GATA5_HUMAN</name>
<comment type="function">
    <text evidence="2 10 14">Transcription factor required during cardiovascular development (PubMed:23289003). Plays an important role in the transcriptional program(s) that underlies smooth muscle cell diversity (By similarity). Binds to the functionally important CEF-1 nuclear protein binding site in the cardiac-specific slow/cardiac troponin C transcriptional enhancer (PubMed:25543888).</text>
</comment>
<comment type="interaction">
    <interactant intactId="EBI-12132270">
        <id>Q9BWX5</id>
    </interactant>
    <interactant intactId="EBI-948603">
        <id>Q03989</id>
        <label>ARID5A</label>
    </interactant>
    <organismsDiffer>false</organismsDiffer>
    <experiments>3</experiments>
</comment>
<comment type="interaction">
    <interactant intactId="EBI-12132270">
        <id>Q9BWX5</id>
    </interactant>
    <interactant intactId="EBI-3867333">
        <id>A8MQ03</id>
        <label>CYSRT1</label>
    </interactant>
    <organismsDiffer>false</organismsDiffer>
    <experiments>3</experiments>
</comment>
<comment type="interaction">
    <interactant intactId="EBI-12132270">
        <id>Q9BWX5</id>
    </interactant>
    <interactant intactId="EBI-12197079">
        <id>P84074</id>
        <label>HPCA</label>
    </interactant>
    <organismsDiffer>false</organismsDiffer>
    <experiments>3</experiments>
</comment>
<comment type="interaction">
    <interactant intactId="EBI-12132270">
        <id>Q9BWX5</id>
    </interactant>
    <interactant intactId="EBI-749311">
        <id>P37235</id>
        <label>HPCAL1</label>
    </interactant>
    <organismsDiffer>false</organismsDiffer>
    <experiments>3</experiments>
</comment>
<comment type="interaction">
    <interactant intactId="EBI-12132270">
        <id>Q9BWX5</id>
    </interactant>
    <interactant intactId="EBI-716006">
        <id>Q9Y5V3</id>
        <label>MAGED1</label>
    </interactant>
    <organismsDiffer>false</organismsDiffer>
    <experiments>3</experiments>
</comment>
<comment type="interaction">
    <interactant intactId="EBI-12132270">
        <id>Q9BWX5</id>
    </interactant>
    <interactant intactId="EBI-726466">
        <id>O15496</id>
        <label>PLA2G10</label>
    </interactant>
    <organismsDiffer>false</organismsDiffer>
    <experiments>3</experiments>
</comment>
<comment type="interaction">
    <interactant intactId="EBI-12132270">
        <id>Q9BWX5</id>
    </interactant>
    <interactant intactId="EBI-781384">
        <id>P37231</id>
        <label>PPARG</label>
    </interactant>
    <organismsDiffer>false</organismsDiffer>
    <experiments>3</experiments>
</comment>
<comment type="subcellular location">
    <subcellularLocation>
        <location evidence="1">Nucleus</location>
    </subcellularLocation>
</comment>
<comment type="disease" evidence="5 6 7 8 9 10 11 12 13 14">
    <disease id="DI-05221">
        <name>Congenital heart defects, multiple types, 5</name>
        <acronym>CHTD5</acronym>
        <description>A disorder characterized by congenital developmental abnormalities involving structures of the heart. Common defects include transposition of the great arteries, aortic stenosis, atrial septal defect, ventricular septal defect, pulmonic stenosis, patent ductus arteriosus, and tetralogy of Fallot. Some patients also have cardiac arrhythmias, which may be due to the anatomic defect itself or to surgical interventions. CHTD5 inheritance can be autosomal dominant or recessive.</description>
        <dbReference type="MIM" id="617912"/>
    </disease>
    <text>The disease is caused by variants affecting the gene represented in this entry.</text>
</comment>
<comment type="sequence caution" evidence="15">
    <conflict type="erroneous initiation">
        <sequence resource="EMBL-CDS" id="AAH47790"/>
    </conflict>
    <text>Extended N-terminus.</text>
</comment>
<accession>Q9BWX5</accession>
<accession>D9ZGF7</accession>
<accession>Q17RE2</accession>
<accession>Q86VU4</accession>
<keyword id="KW-0010">Activator</keyword>
<keyword id="KW-0225">Disease variant</keyword>
<keyword id="KW-0238">DNA-binding</keyword>
<keyword id="KW-0479">Metal-binding</keyword>
<keyword id="KW-0539">Nucleus</keyword>
<keyword id="KW-1267">Proteomics identification</keyword>
<keyword id="KW-1185">Reference proteome</keyword>
<keyword id="KW-0677">Repeat</keyword>
<keyword id="KW-0804">Transcription</keyword>
<keyword id="KW-0805">Transcription regulation</keyword>
<keyword id="KW-0862">Zinc</keyword>
<keyword id="KW-0863">Zinc-finger</keyword>
<proteinExistence type="evidence at protein level"/>
<organism>
    <name type="scientific">Homo sapiens</name>
    <name type="common">Human</name>
    <dbReference type="NCBI Taxonomy" id="9606"/>
    <lineage>
        <taxon>Eukaryota</taxon>
        <taxon>Metazoa</taxon>
        <taxon>Chordata</taxon>
        <taxon>Craniata</taxon>
        <taxon>Vertebrata</taxon>
        <taxon>Euteleostomi</taxon>
        <taxon>Mammalia</taxon>
        <taxon>Eutheria</taxon>
        <taxon>Euarchontoglires</taxon>
        <taxon>Primates</taxon>
        <taxon>Haplorrhini</taxon>
        <taxon>Catarrhini</taxon>
        <taxon>Hominidae</taxon>
        <taxon>Homo</taxon>
    </lineage>
</organism>
<reference key="1">
    <citation type="submission" date="2010-03" db="EMBL/GenBank/DDBJ databases">
        <authorList>
            <person name="Rieder M.J."/>
            <person name="Bertucci C."/>
            <person name="Stanaway I.B."/>
            <person name="Johnson E.J."/>
            <person name="Swanson J.E."/>
            <person name="Siegel D.L."/>
            <person name="da Ponte S.H."/>
            <person name="Igartua C."/>
            <person name="Patterson K."/>
            <person name="Nickerson D.A."/>
        </authorList>
    </citation>
    <scope>NUCLEOTIDE SEQUENCE [GENOMIC DNA]</scope>
</reference>
<reference key="2">
    <citation type="journal article" date="2001" name="Nature">
        <title>The DNA sequence and comparative analysis of human chromosome 20.</title>
        <authorList>
            <person name="Deloukas P."/>
            <person name="Matthews L.H."/>
            <person name="Ashurst J.L."/>
            <person name="Burton J."/>
            <person name="Gilbert J.G.R."/>
            <person name="Jones M."/>
            <person name="Stavrides G."/>
            <person name="Almeida J.P."/>
            <person name="Babbage A.K."/>
            <person name="Bagguley C.L."/>
            <person name="Bailey J."/>
            <person name="Barlow K.F."/>
            <person name="Bates K.N."/>
            <person name="Beard L.M."/>
            <person name="Beare D.M."/>
            <person name="Beasley O.P."/>
            <person name="Bird C.P."/>
            <person name="Blakey S.E."/>
            <person name="Bridgeman A.M."/>
            <person name="Brown A.J."/>
            <person name="Buck D."/>
            <person name="Burrill W.D."/>
            <person name="Butler A.P."/>
            <person name="Carder C."/>
            <person name="Carter N.P."/>
            <person name="Chapman J.C."/>
            <person name="Clamp M."/>
            <person name="Clark G."/>
            <person name="Clark L.N."/>
            <person name="Clark S.Y."/>
            <person name="Clee C.M."/>
            <person name="Clegg S."/>
            <person name="Cobley V.E."/>
            <person name="Collier R.E."/>
            <person name="Connor R.E."/>
            <person name="Corby N.R."/>
            <person name="Coulson A."/>
            <person name="Coville G.J."/>
            <person name="Deadman R."/>
            <person name="Dhami P.D."/>
            <person name="Dunn M."/>
            <person name="Ellington A.G."/>
            <person name="Frankland J.A."/>
            <person name="Fraser A."/>
            <person name="French L."/>
            <person name="Garner P."/>
            <person name="Grafham D.V."/>
            <person name="Griffiths C."/>
            <person name="Griffiths M.N.D."/>
            <person name="Gwilliam R."/>
            <person name="Hall R.E."/>
            <person name="Hammond S."/>
            <person name="Harley J.L."/>
            <person name="Heath P.D."/>
            <person name="Ho S."/>
            <person name="Holden J.L."/>
            <person name="Howden P.J."/>
            <person name="Huckle E."/>
            <person name="Hunt A.R."/>
            <person name="Hunt S.E."/>
            <person name="Jekosch K."/>
            <person name="Johnson C.M."/>
            <person name="Johnson D."/>
            <person name="Kay M.P."/>
            <person name="Kimberley A.M."/>
            <person name="King A."/>
            <person name="Knights A."/>
            <person name="Laird G.K."/>
            <person name="Lawlor S."/>
            <person name="Lehvaeslaiho M.H."/>
            <person name="Leversha M.A."/>
            <person name="Lloyd C."/>
            <person name="Lloyd D.M."/>
            <person name="Lovell J.D."/>
            <person name="Marsh V.L."/>
            <person name="Martin S.L."/>
            <person name="McConnachie L.J."/>
            <person name="McLay K."/>
            <person name="McMurray A.A."/>
            <person name="Milne S.A."/>
            <person name="Mistry D."/>
            <person name="Moore M.J.F."/>
            <person name="Mullikin J.C."/>
            <person name="Nickerson T."/>
            <person name="Oliver K."/>
            <person name="Parker A."/>
            <person name="Patel R."/>
            <person name="Pearce T.A.V."/>
            <person name="Peck A.I."/>
            <person name="Phillimore B.J.C.T."/>
            <person name="Prathalingam S.R."/>
            <person name="Plumb R.W."/>
            <person name="Ramsay H."/>
            <person name="Rice C.M."/>
            <person name="Ross M.T."/>
            <person name="Scott C.E."/>
            <person name="Sehra H.K."/>
            <person name="Shownkeen R."/>
            <person name="Sims S."/>
            <person name="Skuce C.D."/>
            <person name="Smith M.L."/>
            <person name="Soderlund C."/>
            <person name="Steward C.A."/>
            <person name="Sulston J.E."/>
            <person name="Swann R.M."/>
            <person name="Sycamore N."/>
            <person name="Taylor R."/>
            <person name="Tee L."/>
            <person name="Thomas D.W."/>
            <person name="Thorpe A."/>
            <person name="Tracey A."/>
            <person name="Tromans A.C."/>
            <person name="Vaudin M."/>
            <person name="Wall M."/>
            <person name="Wallis J.M."/>
            <person name="Whitehead S.L."/>
            <person name="Whittaker P."/>
            <person name="Willey D.L."/>
            <person name="Williams L."/>
            <person name="Williams S.A."/>
            <person name="Wilming L."/>
            <person name="Wray P.W."/>
            <person name="Hubbard T."/>
            <person name="Durbin R.M."/>
            <person name="Bentley D.R."/>
            <person name="Beck S."/>
            <person name="Rogers J."/>
        </authorList>
    </citation>
    <scope>NUCLEOTIDE SEQUENCE [LARGE SCALE GENOMIC DNA]</scope>
</reference>
<reference key="3">
    <citation type="submission" date="2005-09" db="EMBL/GenBank/DDBJ databases">
        <authorList>
            <person name="Mural R.J."/>
            <person name="Istrail S."/>
            <person name="Sutton G."/>
            <person name="Florea L."/>
            <person name="Halpern A.L."/>
            <person name="Mobarry C.M."/>
            <person name="Lippert R."/>
            <person name="Walenz B."/>
            <person name="Shatkay H."/>
            <person name="Dew I."/>
            <person name="Miller J.R."/>
            <person name="Flanigan M.J."/>
            <person name="Edwards N.J."/>
            <person name="Bolanos R."/>
            <person name="Fasulo D."/>
            <person name="Halldorsson B.V."/>
            <person name="Hannenhalli S."/>
            <person name="Turner R."/>
            <person name="Yooseph S."/>
            <person name="Lu F."/>
            <person name="Nusskern D.R."/>
            <person name="Shue B.C."/>
            <person name="Zheng X.H."/>
            <person name="Zhong F."/>
            <person name="Delcher A.L."/>
            <person name="Huson D.H."/>
            <person name="Kravitz S.A."/>
            <person name="Mouchard L."/>
            <person name="Reinert K."/>
            <person name="Remington K.A."/>
            <person name="Clark A.G."/>
            <person name="Waterman M.S."/>
            <person name="Eichler E.E."/>
            <person name="Adams M.D."/>
            <person name="Hunkapiller M.W."/>
            <person name="Myers E.W."/>
            <person name="Venter J.C."/>
        </authorList>
    </citation>
    <scope>NUCLEOTIDE SEQUENCE [LARGE SCALE GENOMIC DNA]</scope>
</reference>
<reference key="4">
    <citation type="journal article" date="2004" name="Genome Res.">
        <title>The status, quality, and expansion of the NIH full-length cDNA project: the Mammalian Gene Collection (MGC).</title>
        <authorList>
            <consortium name="The MGC Project Team"/>
        </authorList>
    </citation>
    <scope>NUCLEOTIDE SEQUENCE [LARGE SCALE MRNA]</scope>
    <source>
        <tissue>Uterus</tissue>
    </source>
</reference>
<reference key="5">
    <citation type="journal article" date="2012" name="Clinics (Sao Paulo)">
        <title>Novel GATA5 loss-of-function mutations underlie familial atrial fibrillation.</title>
        <authorList>
            <person name="Gu J.Y."/>
            <person name="Xu J.H."/>
            <person name="Yu H."/>
            <person name="Yang Y.Q."/>
        </authorList>
    </citation>
    <scope>INVOLVEMENT IN CHTD5</scope>
    <scope>VARIANTS CHTD5 PHE-138 AND GLY-210</scope>
    <scope>CHARACTERIZATION OF VARIANTS CHTD5 PHE-138 AND GLY-210</scope>
</reference>
<reference key="6">
    <citation type="journal article" date="2012" name="Int. J. Cardiol.">
        <title>Mutational spectrum of the GATA5 gene associated with familial atrial fibrillation.</title>
        <authorList>
            <person name="Yang Y.Q."/>
            <person name="Wang J."/>
            <person name="Wang X.H."/>
            <person name="Wang Q."/>
            <person name="Tan H.W."/>
            <person name="Zhang M."/>
            <person name="Shen F.F."/>
            <person name="Jiang J.Q."/>
            <person name="Fang W.Y."/>
            <person name="Liu X."/>
        </authorList>
    </citation>
    <scope>INVOLVEMENT IN CHTD5</scope>
    <scope>VARIANTS CHTD5 VAL-184; THR-218 AND PRO-266</scope>
</reference>
<reference key="7">
    <citation type="journal article" date="2012" name="J. Mol. Cell. Cardiol.">
        <title>Rare non-synonymous variations in the transcriptional activation domains of GATA5 in bicuspid aortic valve disease.</title>
        <authorList>
            <person name="Padang R."/>
            <person name="Bagnall R.D."/>
            <person name="Richmond D.R."/>
            <person name="Bannon P.G."/>
            <person name="Semsarian C."/>
        </authorList>
    </citation>
    <scope>INVOLVEMENT IN CHTD5</scope>
    <scope>VARIANT CHTD5 HIS-142</scope>
    <scope>VARIANTS ARG-3; TRP-19; PRO-67 AND SER-166</scope>
</reference>
<reference key="8">
    <citation type="journal article" date="2013" name="Int. J. Cardiol.">
        <title>Prevalence and spectrum of GATA5 mutations associated with congenital heart disease.</title>
        <authorList>
            <person name="Jiang J.Q."/>
            <person name="Li R.G."/>
            <person name="Wang J."/>
            <person name="Liu X.Y."/>
            <person name="Xu Y.J."/>
            <person name="Fang W.Y."/>
            <person name="Chen X.Z."/>
            <person name="Zhang W."/>
            <person name="Wang X.Z."/>
            <person name="Yang Y.Q."/>
        </authorList>
    </citation>
    <scope>INVOLVEMENT IN CHTD5</scope>
    <scope>VARIANTS CHTD5 GLY-132; ALA-190; HIS-223 AND ARG-274</scope>
</reference>
<reference key="9">
    <citation type="journal article" date="2013" name="Int. J. Med. Sci.">
        <title>GATA5 loss-of-function mutations underlie tetralogy of fallot.</title>
        <authorList>
            <person name="Wei D."/>
            <person name="Bao H."/>
            <person name="Liu X.Y."/>
            <person name="Zhou N."/>
            <person name="Wang Q."/>
            <person name="Li R.G."/>
            <person name="Xu Y.J."/>
            <person name="Yang Y.Q."/>
        </authorList>
    </citation>
    <scope>INVOLVEMENT IN CHTD5</scope>
    <scope>VARIANTS CHTD5 GLY-187 AND ARG-207</scope>
    <scope>CHARACTERIZATION OF CHTD5 VARIANTS GLY-187 AND ARG-207</scope>
    <scope>FUNCTION</scope>
</reference>
<reference key="10">
    <citation type="journal article" date="2013" name="Int. J. Mol. Med.">
        <title>A novel GATA5 loss-of-function mutation underlies lone atrial fibrillation.</title>
        <authorList>
            <person name="Wang X.H."/>
            <person name="Huang C.X."/>
            <person name="Wang Q."/>
            <person name="Li R.G."/>
            <person name="Xu Y.J."/>
            <person name="Liu X."/>
            <person name="Fang W.Y."/>
            <person name="Yang Y.Q."/>
        </authorList>
    </citation>
    <scope>INVOLVEMENT IN CHTD5</scope>
    <scope>VARIANT CHTD5 GLY-200</scope>
    <scope>CHARACTERIZATION OF VARIANT CHTD5 GLY-200</scope>
</reference>
<reference key="11">
    <citation type="journal article" date="2013" name="Pediatr. Cardiol.">
        <title>GATA5 loss-of-function mutation responsible for the congenital ventriculoseptal defect.</title>
        <authorList>
            <person name="Wei D."/>
            <person name="Bao H."/>
            <person name="Zhou N."/>
            <person name="Zheng G.F."/>
            <person name="Liu X.Y."/>
            <person name="Yang Y.Q."/>
        </authorList>
    </citation>
    <scope>INVOLVEMENT IN CHTD5</scope>
    <scope>VARIANT CHTD5 VAL-199</scope>
    <scope>CHARACTERIZATION OF VARIANT CHTD5 VAL-199</scope>
</reference>
<reference key="12">
    <citation type="journal article" date="2014" name="Int. J. Mol. Med.">
        <title>GATA5 loss-of-function mutations associated with congenital bicuspid aortic valve.</title>
        <authorList>
            <person name="Shi L.M."/>
            <person name="Tao J.W."/>
            <person name="Qiu X.B."/>
            <person name="Wang J."/>
            <person name="Yuan F."/>
            <person name="Xu L."/>
            <person name="Liu H."/>
            <person name="Li R.G."/>
            <person name="Xu Y.J."/>
            <person name="Wang Q."/>
            <person name="Zheng H.Z."/>
            <person name="Li X."/>
            <person name="Wang X.Z."/>
            <person name="Zhang M."/>
            <person name="Qu X.K."/>
            <person name="Yang Y.Q."/>
        </authorList>
    </citation>
    <scope>INVOLVEMENT IN CHTD5</scope>
    <scope>VARIANTS CHTD5 ASP-16 AND PRO-252</scope>
    <scope>CHARACTERIZATION OF VARIANTS CHTD5 ASP-16 AND PRO-252</scope>
</reference>
<reference key="13">
    <citation type="journal article" date="2014" name="Int. J. Mol. Med.">
        <title>Somatic GATA5 mutations in sporadic tetralogy of Fallot.</title>
        <authorList>
            <person name="Huang R.T."/>
            <person name="Xue S."/>
            <person name="Xu Y.J."/>
            <person name="Zhou M."/>
            <person name="Yang Y.Q."/>
        </authorList>
    </citation>
    <scope>INVOLVEMENT IN CHTD5</scope>
    <scope>VARIANTS CHTD5 GLU-203 AND 208-TYR--ALA-397 DEL</scope>
    <scope>CHARACTERIZATION OF VARIANTS CHTD5 GLU-203 AND 208-TYR--ALA-397 DEL</scope>
</reference>
<reference key="14">
    <citation type="journal article" date="2015" name="Int. J. Mol. Med.">
        <title>GATA5 loss-of-function mutation in familial dilated cardiomyopathy.</title>
        <authorList>
            <person name="Zhang X.L."/>
            <person name="Dai N."/>
            <person name="Tang K."/>
            <person name="Chen Y.Q."/>
            <person name="Chen W."/>
            <person name="Wang J."/>
            <person name="Zhao C.M."/>
            <person name="Yuan F."/>
            <person name="Qiu X.B."/>
            <person name="Qu X.K."/>
            <person name="Yang Y.Q."/>
            <person name="Xu Y.W."/>
        </authorList>
    </citation>
    <scope>INVOLVEMENT IN CHTD5</scope>
    <scope>VARIANT CHTD5 ASP-240</scope>
    <scope>CHARACTERIZATION OF VARIANT CHTD5 ASP-240</scope>
    <scope>FUNCTION</scope>
</reference>
<gene>
    <name evidence="16" type="primary">GATA5</name>
</gene>
<dbReference type="EMBL" id="HM015595">
    <property type="protein sequence ID" value="ADL14516.1"/>
    <property type="molecule type" value="Genomic_DNA"/>
</dbReference>
<dbReference type="EMBL" id="AL499627">
    <property type="status" value="NOT_ANNOTATED_CDS"/>
    <property type="molecule type" value="Genomic_DNA"/>
</dbReference>
<dbReference type="EMBL" id="CH471077">
    <property type="protein sequence ID" value="EAW75360.1"/>
    <property type="molecule type" value="Genomic_DNA"/>
</dbReference>
<dbReference type="EMBL" id="CH471077">
    <property type="protein sequence ID" value="EAW75361.1"/>
    <property type="molecule type" value="Genomic_DNA"/>
</dbReference>
<dbReference type="EMBL" id="BC047790">
    <property type="protein sequence ID" value="AAH47790.1"/>
    <property type="status" value="ALT_INIT"/>
    <property type="molecule type" value="mRNA"/>
</dbReference>
<dbReference type="EMBL" id="BC117356">
    <property type="protein sequence ID" value="AAI17357.1"/>
    <property type="molecule type" value="mRNA"/>
</dbReference>
<dbReference type="EMBL" id="BC117358">
    <property type="protein sequence ID" value="AAI17359.1"/>
    <property type="molecule type" value="mRNA"/>
</dbReference>
<dbReference type="CCDS" id="CCDS13499.1"/>
<dbReference type="RefSeq" id="NP_536721.1">
    <property type="nucleotide sequence ID" value="NM_080473.5"/>
</dbReference>
<dbReference type="RefSeq" id="XP_006723762.1">
    <property type="nucleotide sequence ID" value="XM_006723699.3"/>
</dbReference>
<dbReference type="RefSeq" id="XP_054178962.1">
    <property type="nucleotide sequence ID" value="XM_054322987.1"/>
</dbReference>
<dbReference type="RefSeq" id="XP_054178963.1">
    <property type="nucleotide sequence ID" value="XM_054322988.1"/>
</dbReference>
<dbReference type="SMR" id="Q9BWX5"/>
<dbReference type="BioGRID" id="126640">
    <property type="interactions" value="10"/>
</dbReference>
<dbReference type="FunCoup" id="Q9BWX5">
    <property type="interactions" value="986"/>
</dbReference>
<dbReference type="IntAct" id="Q9BWX5">
    <property type="interactions" value="7"/>
</dbReference>
<dbReference type="STRING" id="9606.ENSP00000252997"/>
<dbReference type="GlyGen" id="Q9BWX5">
    <property type="glycosylation" value="1 site, 1 O-linked glycan (1 site)"/>
</dbReference>
<dbReference type="iPTMnet" id="Q9BWX5"/>
<dbReference type="PhosphoSitePlus" id="Q9BWX5"/>
<dbReference type="BioMuta" id="GATA5"/>
<dbReference type="DMDM" id="20138325"/>
<dbReference type="jPOST" id="Q9BWX5"/>
<dbReference type="MassIVE" id="Q9BWX5"/>
<dbReference type="PaxDb" id="9606-ENSP00000252997"/>
<dbReference type="PeptideAtlas" id="Q9BWX5"/>
<dbReference type="ProteomicsDB" id="79338"/>
<dbReference type="Antibodypedia" id="29533">
    <property type="antibodies" value="257 antibodies from 34 providers"/>
</dbReference>
<dbReference type="DNASU" id="140628"/>
<dbReference type="Ensembl" id="ENST00000252997.3">
    <property type="protein sequence ID" value="ENSP00000252997.2"/>
    <property type="gene ID" value="ENSG00000130700.7"/>
</dbReference>
<dbReference type="GeneID" id="140628"/>
<dbReference type="KEGG" id="hsa:140628"/>
<dbReference type="MANE-Select" id="ENST00000252997.3">
    <property type="protein sequence ID" value="ENSP00000252997.2"/>
    <property type="RefSeq nucleotide sequence ID" value="NM_080473.5"/>
    <property type="RefSeq protein sequence ID" value="NP_536721.1"/>
</dbReference>
<dbReference type="UCSC" id="uc002ycx.1">
    <property type="organism name" value="human"/>
</dbReference>
<dbReference type="AGR" id="HGNC:15802"/>
<dbReference type="CTD" id="140628"/>
<dbReference type="DisGeNET" id="140628"/>
<dbReference type="GeneCards" id="GATA5"/>
<dbReference type="HGNC" id="HGNC:15802">
    <property type="gene designation" value="GATA5"/>
</dbReference>
<dbReference type="HPA" id="ENSG00000130700">
    <property type="expression patterns" value="Tissue enhanced (intestine, testis, urinary bladder)"/>
</dbReference>
<dbReference type="MalaCards" id="GATA5"/>
<dbReference type="MIM" id="611496">
    <property type="type" value="gene"/>
</dbReference>
<dbReference type="MIM" id="617912">
    <property type="type" value="phenotype"/>
</dbReference>
<dbReference type="neXtProt" id="NX_Q9BWX5"/>
<dbReference type="OpenTargets" id="ENSG00000130700"/>
<dbReference type="Orphanet" id="334">
    <property type="disease" value="Familial atrial fibrillation"/>
</dbReference>
<dbReference type="Orphanet" id="402075">
    <property type="disease" value="Familial bicuspid aortic valve"/>
</dbReference>
<dbReference type="Orphanet" id="3303">
    <property type="disease" value="Tetralogy of Fallot"/>
</dbReference>
<dbReference type="PharmGKB" id="PA28588"/>
<dbReference type="VEuPathDB" id="HostDB:ENSG00000130700"/>
<dbReference type="eggNOG" id="KOG1601">
    <property type="taxonomic scope" value="Eukaryota"/>
</dbReference>
<dbReference type="GeneTree" id="ENSGT00940000160139"/>
<dbReference type="HOGENOM" id="CLU_027524_0_0_1"/>
<dbReference type="InParanoid" id="Q9BWX5"/>
<dbReference type="OMA" id="FEPEDYA"/>
<dbReference type="OrthoDB" id="515401at2759"/>
<dbReference type="PAN-GO" id="Q9BWX5">
    <property type="GO annotations" value="6 GO annotations based on evolutionary models"/>
</dbReference>
<dbReference type="PhylomeDB" id="Q9BWX5"/>
<dbReference type="TreeFam" id="TF315391"/>
<dbReference type="PathwayCommons" id="Q9BWX5"/>
<dbReference type="Reactome" id="R-HSA-983231">
    <property type="pathway name" value="Factors involved in megakaryocyte development and platelet production"/>
</dbReference>
<dbReference type="SignaLink" id="Q9BWX5"/>
<dbReference type="SIGNOR" id="Q9BWX5"/>
<dbReference type="BioGRID-ORCS" id="140628">
    <property type="hits" value="11 hits in 1169 CRISPR screens"/>
</dbReference>
<dbReference type="GeneWiki" id="GATA5"/>
<dbReference type="GenomeRNAi" id="140628"/>
<dbReference type="Pharos" id="Q9BWX5">
    <property type="development level" value="Tbio"/>
</dbReference>
<dbReference type="PRO" id="PR:Q9BWX5"/>
<dbReference type="Proteomes" id="UP000005640">
    <property type="component" value="Chromosome 20"/>
</dbReference>
<dbReference type="RNAct" id="Q9BWX5">
    <property type="molecule type" value="protein"/>
</dbReference>
<dbReference type="Bgee" id="ENSG00000130700">
    <property type="expression patterns" value="Expressed in ileal mucosa and 71 other cell types or tissues"/>
</dbReference>
<dbReference type="GO" id="GO:0000785">
    <property type="term" value="C:chromatin"/>
    <property type="evidence" value="ECO:0000250"/>
    <property type="project" value="BHF-UCL"/>
</dbReference>
<dbReference type="GO" id="GO:0005654">
    <property type="term" value="C:nucleoplasm"/>
    <property type="evidence" value="ECO:0000304"/>
    <property type="project" value="Reactome"/>
</dbReference>
<dbReference type="GO" id="GO:0005634">
    <property type="term" value="C:nucleus"/>
    <property type="evidence" value="ECO:0000314"/>
    <property type="project" value="MGI"/>
</dbReference>
<dbReference type="GO" id="GO:0003700">
    <property type="term" value="F:DNA-binding transcription factor activity"/>
    <property type="evidence" value="ECO:0000314"/>
    <property type="project" value="UniProtKB"/>
</dbReference>
<dbReference type="GO" id="GO:0000981">
    <property type="term" value="F:DNA-binding transcription factor activity, RNA polymerase II-specific"/>
    <property type="evidence" value="ECO:0000250"/>
    <property type="project" value="BHF-UCL"/>
</dbReference>
<dbReference type="GO" id="GO:0000978">
    <property type="term" value="F:RNA polymerase II cis-regulatory region sequence-specific DNA binding"/>
    <property type="evidence" value="ECO:0000318"/>
    <property type="project" value="GO_Central"/>
</dbReference>
<dbReference type="GO" id="GO:1990837">
    <property type="term" value="F:sequence-specific double-stranded DNA binding"/>
    <property type="evidence" value="ECO:0000314"/>
    <property type="project" value="ARUK-UCL"/>
</dbReference>
<dbReference type="GO" id="GO:0000976">
    <property type="term" value="F:transcription cis-regulatory region binding"/>
    <property type="evidence" value="ECO:0000314"/>
    <property type="project" value="MGI"/>
</dbReference>
<dbReference type="GO" id="GO:0008270">
    <property type="term" value="F:zinc ion binding"/>
    <property type="evidence" value="ECO:0007669"/>
    <property type="project" value="UniProtKB-KW"/>
</dbReference>
<dbReference type="GO" id="GO:0003180">
    <property type="term" value="P:aortic valve morphogenesis"/>
    <property type="evidence" value="ECO:0000315"/>
    <property type="project" value="BHF-UCL"/>
</dbReference>
<dbReference type="GO" id="GO:0048738">
    <property type="term" value="P:cardiac muscle tissue development"/>
    <property type="evidence" value="ECO:0000318"/>
    <property type="project" value="GO_Central"/>
</dbReference>
<dbReference type="GO" id="GO:0045165">
    <property type="term" value="P:cell fate commitment"/>
    <property type="evidence" value="ECO:0000318"/>
    <property type="project" value="GO_Central"/>
</dbReference>
<dbReference type="GO" id="GO:0071773">
    <property type="term" value="P:cellular response to BMP stimulus"/>
    <property type="evidence" value="ECO:0007669"/>
    <property type="project" value="Ensembl"/>
</dbReference>
<dbReference type="GO" id="GO:0070301">
    <property type="term" value="P:cellular response to hydrogen peroxide"/>
    <property type="evidence" value="ECO:0007669"/>
    <property type="project" value="Ensembl"/>
</dbReference>
<dbReference type="GO" id="GO:0071732">
    <property type="term" value="P:cellular response to nitric oxide"/>
    <property type="evidence" value="ECO:0007669"/>
    <property type="project" value="Ensembl"/>
</dbReference>
<dbReference type="GO" id="GO:0003274">
    <property type="term" value="P:endocardial cushion fusion"/>
    <property type="evidence" value="ECO:0000250"/>
    <property type="project" value="BHF-UCL"/>
</dbReference>
<dbReference type="GO" id="GO:0003129">
    <property type="term" value="P:heart induction"/>
    <property type="evidence" value="ECO:0000250"/>
    <property type="project" value="BHF-UCL"/>
</dbReference>
<dbReference type="GO" id="GO:0060575">
    <property type="term" value="P:intestinal epithelial cell differentiation"/>
    <property type="evidence" value="ECO:0000314"/>
    <property type="project" value="MGI"/>
</dbReference>
<dbReference type="GO" id="GO:0010614">
    <property type="term" value="P:negative regulation of cardiac muscle hypertrophy"/>
    <property type="evidence" value="ECO:0007669"/>
    <property type="project" value="Ensembl"/>
</dbReference>
<dbReference type="GO" id="GO:0010629">
    <property type="term" value="P:negative regulation of gene expression"/>
    <property type="evidence" value="ECO:0000250"/>
    <property type="project" value="BHF-UCL"/>
</dbReference>
<dbReference type="GO" id="GO:0000122">
    <property type="term" value="P:negative regulation of transcription by RNA polymerase II"/>
    <property type="evidence" value="ECO:0000318"/>
    <property type="project" value="GO_Central"/>
</dbReference>
<dbReference type="GO" id="GO:1902512">
    <property type="term" value="P:positive regulation of apoptotic DNA fragmentation"/>
    <property type="evidence" value="ECO:0007669"/>
    <property type="project" value="Ensembl"/>
</dbReference>
<dbReference type="GO" id="GO:0062000">
    <property type="term" value="P:positive regulation of cardiac endothelial to mesenchymal transition"/>
    <property type="evidence" value="ECO:0000250"/>
    <property type="project" value="BHF-UCL"/>
</dbReference>
<dbReference type="GO" id="GO:0010628">
    <property type="term" value="P:positive regulation of gene expression"/>
    <property type="evidence" value="ECO:0000250"/>
    <property type="project" value="BHF-UCL"/>
</dbReference>
<dbReference type="GO" id="GO:0045747">
    <property type="term" value="P:positive regulation of Notch signaling pathway"/>
    <property type="evidence" value="ECO:0000250"/>
    <property type="project" value="BHF-UCL"/>
</dbReference>
<dbReference type="GO" id="GO:0045944">
    <property type="term" value="P:positive regulation of transcription by RNA polymerase II"/>
    <property type="evidence" value="ECO:0000314"/>
    <property type="project" value="UniProtKB"/>
</dbReference>
<dbReference type="CDD" id="cd00202">
    <property type="entry name" value="ZnF_GATA"/>
    <property type="match status" value="2"/>
</dbReference>
<dbReference type="FunFam" id="3.30.50.10:FF:000001">
    <property type="entry name" value="GATA transcription factor (GATAd)"/>
    <property type="match status" value="1"/>
</dbReference>
<dbReference type="FunFam" id="3.30.50.10:FF:000032">
    <property type="entry name" value="Transcription factor GATA-3"/>
    <property type="match status" value="1"/>
</dbReference>
<dbReference type="Gene3D" id="3.30.50.10">
    <property type="entry name" value="Erythroid Transcription Factor GATA-1, subunit A"/>
    <property type="match status" value="2"/>
</dbReference>
<dbReference type="InterPro" id="IPR008013">
    <property type="entry name" value="GATA_N"/>
</dbReference>
<dbReference type="InterPro" id="IPR016375">
    <property type="entry name" value="TF_GATA_4/5/6"/>
</dbReference>
<dbReference type="InterPro" id="IPR039355">
    <property type="entry name" value="Transcription_factor_GATA"/>
</dbReference>
<dbReference type="InterPro" id="IPR000679">
    <property type="entry name" value="Znf_GATA"/>
</dbReference>
<dbReference type="InterPro" id="IPR013088">
    <property type="entry name" value="Znf_NHR/GATA"/>
</dbReference>
<dbReference type="PANTHER" id="PTHR10071">
    <property type="entry name" value="TRANSCRIPTION FACTOR GATA FAMILY MEMBER"/>
    <property type="match status" value="1"/>
</dbReference>
<dbReference type="PANTHER" id="PTHR10071:SF289">
    <property type="entry name" value="TRANSCRIPTION FACTOR GATA-5"/>
    <property type="match status" value="1"/>
</dbReference>
<dbReference type="Pfam" id="PF00320">
    <property type="entry name" value="GATA"/>
    <property type="match status" value="2"/>
</dbReference>
<dbReference type="Pfam" id="PF05349">
    <property type="entry name" value="GATA-N"/>
    <property type="match status" value="1"/>
</dbReference>
<dbReference type="PIRSF" id="PIRSF003028">
    <property type="entry name" value="TF_GATA_4/5/6"/>
    <property type="match status" value="1"/>
</dbReference>
<dbReference type="PRINTS" id="PR00619">
    <property type="entry name" value="GATAZNFINGER"/>
</dbReference>
<dbReference type="SMART" id="SM00401">
    <property type="entry name" value="ZnF_GATA"/>
    <property type="match status" value="2"/>
</dbReference>
<dbReference type="SUPFAM" id="SSF57716">
    <property type="entry name" value="Glucocorticoid receptor-like (DNA-binding domain)"/>
    <property type="match status" value="2"/>
</dbReference>
<dbReference type="PROSITE" id="PS00344">
    <property type="entry name" value="GATA_ZN_FINGER_1"/>
    <property type="match status" value="2"/>
</dbReference>
<dbReference type="PROSITE" id="PS50114">
    <property type="entry name" value="GATA_ZN_FINGER_2"/>
    <property type="match status" value="2"/>
</dbReference>
<evidence type="ECO:0000250" key="1"/>
<evidence type="ECO:0000250" key="2">
    <source>
        <dbReference type="UniProtKB" id="P97489"/>
    </source>
</evidence>
<evidence type="ECO:0000255" key="3">
    <source>
        <dbReference type="PROSITE-ProRule" id="PRU00094"/>
    </source>
</evidence>
<evidence type="ECO:0000256" key="4">
    <source>
        <dbReference type="SAM" id="MobiDB-lite"/>
    </source>
</evidence>
<evidence type="ECO:0000269" key="5">
    <source>
    </source>
</evidence>
<evidence type="ECO:0000269" key="6">
    <source>
    </source>
</evidence>
<evidence type="ECO:0000269" key="7">
    <source>
    </source>
</evidence>
<evidence type="ECO:0000269" key="8">
    <source>
    </source>
</evidence>
<evidence type="ECO:0000269" key="9">
    <source>
    </source>
</evidence>
<evidence type="ECO:0000269" key="10">
    <source>
    </source>
</evidence>
<evidence type="ECO:0000269" key="11">
    <source>
    </source>
</evidence>
<evidence type="ECO:0000269" key="12">
    <source>
    </source>
</evidence>
<evidence type="ECO:0000269" key="13">
    <source>
    </source>
</evidence>
<evidence type="ECO:0000269" key="14">
    <source>
    </source>
</evidence>
<evidence type="ECO:0000305" key="15"/>
<evidence type="ECO:0000312" key="16">
    <source>
        <dbReference type="HGNC" id="HGNC:15802"/>
    </source>
</evidence>
<sequence>MYQSLALAASPRQAAYADSGSFLHAPGAGSPMFVPPARVPSMLSYLSGCEPSPQPPELAARPGWAQTATADSSAFGPGSPHPPAAHPPGATAFPFAHSPSGPGSGGSAGGRDGSAYQGALLPREQFAAPLGRPVGTSYSATYPAYVSPDVAQSWTAGPFDGSVLHGLPGRRPTFVSDFLEEFPGEGRECVNCGALSTPLWRRDGTGHYLCNACGLYHKMNGVNRPLVRPQKRLSSSRRAGLCCTNCHTTNTTLWRRNSEGEPVCNACGLYMKLHGVPRPLAMKKESIQTRKRKPKTIAKARGSSGSTRNASASPSAVASTDSSAATSKAKPSLASPVCPGPSMAPQASGQEDDSLAPGHLEFKFEPEDFAFPSTAPSPQAGLRGALRQEAWCALALA</sequence>